<evidence type="ECO:0000255" key="1">
    <source>
        <dbReference type="HAMAP-Rule" id="MF_01367"/>
    </source>
</evidence>
<evidence type="ECO:0000305" key="2"/>
<keyword id="KW-0687">Ribonucleoprotein</keyword>
<keyword id="KW-0689">Ribosomal protein</keyword>
<keyword id="KW-0694">RNA-binding</keyword>
<keyword id="KW-0699">rRNA-binding</keyword>
<dbReference type="EMBL" id="CP000083">
    <property type="protein sequence ID" value="AAZ27981.1"/>
    <property type="molecule type" value="Genomic_DNA"/>
</dbReference>
<dbReference type="RefSeq" id="WP_011041461.1">
    <property type="nucleotide sequence ID" value="NC_003910.7"/>
</dbReference>
<dbReference type="SMR" id="Q489A3"/>
<dbReference type="STRING" id="167879.CPS_0611"/>
<dbReference type="KEGG" id="cps:CPS_0611"/>
<dbReference type="eggNOG" id="COG0093">
    <property type="taxonomic scope" value="Bacteria"/>
</dbReference>
<dbReference type="HOGENOM" id="CLU_095071_2_1_6"/>
<dbReference type="Proteomes" id="UP000000547">
    <property type="component" value="Chromosome"/>
</dbReference>
<dbReference type="GO" id="GO:0022625">
    <property type="term" value="C:cytosolic large ribosomal subunit"/>
    <property type="evidence" value="ECO:0007669"/>
    <property type="project" value="TreeGrafter"/>
</dbReference>
<dbReference type="GO" id="GO:0070180">
    <property type="term" value="F:large ribosomal subunit rRNA binding"/>
    <property type="evidence" value="ECO:0007669"/>
    <property type="project" value="TreeGrafter"/>
</dbReference>
<dbReference type="GO" id="GO:0003735">
    <property type="term" value="F:structural constituent of ribosome"/>
    <property type="evidence" value="ECO:0007669"/>
    <property type="project" value="InterPro"/>
</dbReference>
<dbReference type="GO" id="GO:0006412">
    <property type="term" value="P:translation"/>
    <property type="evidence" value="ECO:0007669"/>
    <property type="project" value="UniProtKB-UniRule"/>
</dbReference>
<dbReference type="CDD" id="cd00337">
    <property type="entry name" value="Ribosomal_uL14"/>
    <property type="match status" value="1"/>
</dbReference>
<dbReference type="FunFam" id="2.40.150.20:FF:000001">
    <property type="entry name" value="50S ribosomal protein L14"/>
    <property type="match status" value="1"/>
</dbReference>
<dbReference type="Gene3D" id="2.40.150.20">
    <property type="entry name" value="Ribosomal protein L14"/>
    <property type="match status" value="1"/>
</dbReference>
<dbReference type="HAMAP" id="MF_01367">
    <property type="entry name" value="Ribosomal_uL14"/>
    <property type="match status" value="1"/>
</dbReference>
<dbReference type="InterPro" id="IPR000218">
    <property type="entry name" value="Ribosomal_uL14"/>
</dbReference>
<dbReference type="InterPro" id="IPR005745">
    <property type="entry name" value="Ribosomal_uL14_bac-type"/>
</dbReference>
<dbReference type="InterPro" id="IPR036853">
    <property type="entry name" value="Ribosomal_uL14_sf"/>
</dbReference>
<dbReference type="NCBIfam" id="TIGR01067">
    <property type="entry name" value="rplN_bact"/>
    <property type="match status" value="1"/>
</dbReference>
<dbReference type="PANTHER" id="PTHR11761">
    <property type="entry name" value="50S/60S RIBOSOMAL PROTEIN L14/L23"/>
    <property type="match status" value="1"/>
</dbReference>
<dbReference type="PANTHER" id="PTHR11761:SF3">
    <property type="entry name" value="LARGE RIBOSOMAL SUBUNIT PROTEIN UL14M"/>
    <property type="match status" value="1"/>
</dbReference>
<dbReference type="Pfam" id="PF00238">
    <property type="entry name" value="Ribosomal_L14"/>
    <property type="match status" value="1"/>
</dbReference>
<dbReference type="SMART" id="SM01374">
    <property type="entry name" value="Ribosomal_L14"/>
    <property type="match status" value="1"/>
</dbReference>
<dbReference type="SUPFAM" id="SSF50193">
    <property type="entry name" value="Ribosomal protein L14"/>
    <property type="match status" value="1"/>
</dbReference>
<protein>
    <recommendedName>
        <fullName evidence="1">Large ribosomal subunit protein uL14</fullName>
    </recommendedName>
    <alternativeName>
        <fullName evidence="2">50S ribosomal protein L14</fullName>
    </alternativeName>
</protein>
<comment type="function">
    <text evidence="1">Binds to 23S rRNA. Forms part of two intersubunit bridges in the 70S ribosome.</text>
</comment>
<comment type="subunit">
    <text evidence="1">Part of the 50S ribosomal subunit. Forms a cluster with proteins L3 and L19. In the 70S ribosome, L14 and L19 interact and together make contacts with the 16S rRNA in bridges B5 and B8.</text>
</comment>
<comment type="similarity">
    <text evidence="1">Belongs to the universal ribosomal protein uL14 family.</text>
</comment>
<gene>
    <name evidence="1" type="primary">rplN</name>
    <name type="ordered locus">CPS_0611</name>
</gene>
<accession>Q489A3</accession>
<organism>
    <name type="scientific">Colwellia psychrerythraea (strain 34H / ATCC BAA-681)</name>
    <name type="common">Vibrio psychroerythus</name>
    <dbReference type="NCBI Taxonomy" id="167879"/>
    <lineage>
        <taxon>Bacteria</taxon>
        <taxon>Pseudomonadati</taxon>
        <taxon>Pseudomonadota</taxon>
        <taxon>Gammaproteobacteria</taxon>
        <taxon>Alteromonadales</taxon>
        <taxon>Colwelliaceae</taxon>
        <taxon>Colwellia</taxon>
    </lineage>
</organism>
<sequence>MIQMQSQLNVADNSGAKRVQCIKVLGGSHRRYARIGDIIKVAVKEASPRGKVKKGDVHTAVVVRTKKGVRRTDGSAIRFDENAAVMLNANLQPIGTRIFGPVTRELRNEKFMKIVSLAPEVL</sequence>
<reference key="1">
    <citation type="journal article" date="2005" name="Proc. Natl. Acad. Sci. U.S.A.">
        <title>The psychrophilic lifestyle as revealed by the genome sequence of Colwellia psychrerythraea 34H through genomic and proteomic analyses.</title>
        <authorList>
            <person name="Methe B.A."/>
            <person name="Nelson K.E."/>
            <person name="Deming J.W."/>
            <person name="Momen B."/>
            <person name="Melamud E."/>
            <person name="Zhang X."/>
            <person name="Moult J."/>
            <person name="Madupu R."/>
            <person name="Nelson W.C."/>
            <person name="Dodson R.J."/>
            <person name="Brinkac L.M."/>
            <person name="Daugherty S.C."/>
            <person name="Durkin A.S."/>
            <person name="DeBoy R.T."/>
            <person name="Kolonay J.F."/>
            <person name="Sullivan S.A."/>
            <person name="Zhou L."/>
            <person name="Davidsen T.M."/>
            <person name="Wu M."/>
            <person name="Huston A.L."/>
            <person name="Lewis M."/>
            <person name="Weaver B."/>
            <person name="Weidman J.F."/>
            <person name="Khouri H."/>
            <person name="Utterback T.R."/>
            <person name="Feldblyum T.V."/>
            <person name="Fraser C.M."/>
        </authorList>
    </citation>
    <scope>NUCLEOTIDE SEQUENCE [LARGE SCALE GENOMIC DNA]</scope>
    <source>
        <strain>34H / ATCC BAA-681</strain>
    </source>
</reference>
<feature type="chain" id="PRO_0000266471" description="Large ribosomal subunit protein uL14">
    <location>
        <begin position="1"/>
        <end position="122"/>
    </location>
</feature>
<proteinExistence type="inferred from homology"/>
<name>RL14_COLP3</name>